<keyword id="KW-0378">Hydrolase</keyword>
<keyword id="KW-0408">Iron</keyword>
<keyword id="KW-0479">Metal-binding</keyword>
<keyword id="KW-0648">Protein biosynthesis</keyword>
<protein>
    <recommendedName>
        <fullName evidence="1">Peptide deformylase</fullName>
        <shortName evidence="1">PDF</shortName>
        <ecNumber evidence="1">3.5.1.88</ecNumber>
    </recommendedName>
    <alternativeName>
        <fullName evidence="1">Polypeptide deformylase</fullName>
    </alternativeName>
</protein>
<evidence type="ECO:0000255" key="1">
    <source>
        <dbReference type="HAMAP-Rule" id="MF_00163"/>
    </source>
</evidence>
<organism>
    <name type="scientific">Nautilia profundicola (strain ATCC BAA-1463 / DSM 18972 / AmH)</name>
    <dbReference type="NCBI Taxonomy" id="598659"/>
    <lineage>
        <taxon>Bacteria</taxon>
        <taxon>Pseudomonadati</taxon>
        <taxon>Campylobacterota</taxon>
        <taxon>Epsilonproteobacteria</taxon>
        <taxon>Nautiliales</taxon>
        <taxon>Nautiliaceae</taxon>
        <taxon>Nautilia</taxon>
    </lineage>
</organism>
<sequence length="174" mass="20341">MAVLDIVTYPNKVLKQISKPVERFDKDLHKLLDDMYETMIKNNGVGLAAIQVAVPIRALLIDIGDEEGKQSKDTLIEVINPEFLTWDGTQKDTEGCLSVPDYFDEVERYKNVKVKFFDRFGKEHVMEAEGLLSVAFQHETDHLDGHLFVERLDYIKRKKFEKEWKKLLKQKRKK</sequence>
<accession>B9L6X1</accession>
<comment type="function">
    <text evidence="1">Removes the formyl group from the N-terminal Met of newly synthesized proteins. Requires at least a dipeptide for an efficient rate of reaction. N-terminal L-methionine is a prerequisite for activity but the enzyme has broad specificity at other positions.</text>
</comment>
<comment type="catalytic activity">
    <reaction evidence="1">
        <text>N-terminal N-formyl-L-methionyl-[peptide] + H2O = N-terminal L-methionyl-[peptide] + formate</text>
        <dbReference type="Rhea" id="RHEA:24420"/>
        <dbReference type="Rhea" id="RHEA-COMP:10639"/>
        <dbReference type="Rhea" id="RHEA-COMP:10640"/>
        <dbReference type="ChEBI" id="CHEBI:15377"/>
        <dbReference type="ChEBI" id="CHEBI:15740"/>
        <dbReference type="ChEBI" id="CHEBI:49298"/>
        <dbReference type="ChEBI" id="CHEBI:64731"/>
        <dbReference type="EC" id="3.5.1.88"/>
    </reaction>
</comment>
<comment type="cofactor">
    <cofactor evidence="1">
        <name>Fe(2+)</name>
        <dbReference type="ChEBI" id="CHEBI:29033"/>
    </cofactor>
    <text evidence="1">Binds 1 Fe(2+) ion.</text>
</comment>
<comment type="similarity">
    <text evidence="1">Belongs to the polypeptide deformylase family.</text>
</comment>
<reference key="1">
    <citation type="journal article" date="2009" name="PLoS Genet.">
        <title>Adaptations to submarine hydrothermal environments exemplified by the genome of Nautilia profundicola.</title>
        <authorList>
            <person name="Campbell B.J."/>
            <person name="Smith J.L."/>
            <person name="Hanson T.E."/>
            <person name="Klotz M.G."/>
            <person name="Stein L.Y."/>
            <person name="Lee C.K."/>
            <person name="Wu D."/>
            <person name="Robinson J.M."/>
            <person name="Khouri H.M."/>
            <person name="Eisen J.A."/>
            <person name="Cary S.C."/>
        </authorList>
    </citation>
    <scope>NUCLEOTIDE SEQUENCE [LARGE SCALE GENOMIC DNA]</scope>
    <source>
        <strain>ATCC BAA-1463 / DSM 18972 / AmH</strain>
    </source>
</reference>
<gene>
    <name evidence="1" type="primary">def</name>
    <name type="ordered locus">NAMH_1729</name>
</gene>
<dbReference type="EC" id="3.5.1.88" evidence="1"/>
<dbReference type="EMBL" id="CP001279">
    <property type="protein sequence ID" value="ACM93397.1"/>
    <property type="molecule type" value="Genomic_DNA"/>
</dbReference>
<dbReference type="RefSeq" id="WP_015902449.1">
    <property type="nucleotide sequence ID" value="NC_012115.1"/>
</dbReference>
<dbReference type="SMR" id="B9L6X1"/>
<dbReference type="STRING" id="598659.NAMH_1729"/>
<dbReference type="KEGG" id="nam:NAMH_1729"/>
<dbReference type="eggNOG" id="COG0242">
    <property type="taxonomic scope" value="Bacteria"/>
</dbReference>
<dbReference type="HOGENOM" id="CLU_061901_2_0_7"/>
<dbReference type="OrthoDB" id="9804313at2"/>
<dbReference type="Proteomes" id="UP000000448">
    <property type="component" value="Chromosome"/>
</dbReference>
<dbReference type="GO" id="GO:0046872">
    <property type="term" value="F:metal ion binding"/>
    <property type="evidence" value="ECO:0007669"/>
    <property type="project" value="UniProtKB-KW"/>
</dbReference>
<dbReference type="GO" id="GO:0042586">
    <property type="term" value="F:peptide deformylase activity"/>
    <property type="evidence" value="ECO:0007669"/>
    <property type="project" value="UniProtKB-UniRule"/>
</dbReference>
<dbReference type="GO" id="GO:0043686">
    <property type="term" value="P:co-translational protein modification"/>
    <property type="evidence" value="ECO:0007669"/>
    <property type="project" value="TreeGrafter"/>
</dbReference>
<dbReference type="GO" id="GO:0006412">
    <property type="term" value="P:translation"/>
    <property type="evidence" value="ECO:0007669"/>
    <property type="project" value="UniProtKB-UniRule"/>
</dbReference>
<dbReference type="CDD" id="cd00487">
    <property type="entry name" value="Pep_deformylase"/>
    <property type="match status" value="1"/>
</dbReference>
<dbReference type="Gene3D" id="3.90.45.10">
    <property type="entry name" value="Peptide deformylase"/>
    <property type="match status" value="1"/>
</dbReference>
<dbReference type="HAMAP" id="MF_00163">
    <property type="entry name" value="Pep_deformylase"/>
    <property type="match status" value="1"/>
</dbReference>
<dbReference type="InterPro" id="IPR023635">
    <property type="entry name" value="Peptide_deformylase"/>
</dbReference>
<dbReference type="InterPro" id="IPR036821">
    <property type="entry name" value="Peptide_deformylase_sf"/>
</dbReference>
<dbReference type="NCBIfam" id="TIGR00079">
    <property type="entry name" value="pept_deformyl"/>
    <property type="match status" value="1"/>
</dbReference>
<dbReference type="NCBIfam" id="NF001159">
    <property type="entry name" value="PRK00150.1-3"/>
    <property type="match status" value="1"/>
</dbReference>
<dbReference type="PANTHER" id="PTHR10458">
    <property type="entry name" value="PEPTIDE DEFORMYLASE"/>
    <property type="match status" value="1"/>
</dbReference>
<dbReference type="PANTHER" id="PTHR10458:SF22">
    <property type="entry name" value="PEPTIDE DEFORMYLASE"/>
    <property type="match status" value="1"/>
</dbReference>
<dbReference type="Pfam" id="PF01327">
    <property type="entry name" value="Pep_deformylase"/>
    <property type="match status" value="1"/>
</dbReference>
<dbReference type="PIRSF" id="PIRSF004749">
    <property type="entry name" value="Pep_def"/>
    <property type="match status" value="1"/>
</dbReference>
<dbReference type="PRINTS" id="PR01576">
    <property type="entry name" value="PDEFORMYLASE"/>
</dbReference>
<dbReference type="SUPFAM" id="SSF56420">
    <property type="entry name" value="Peptide deformylase"/>
    <property type="match status" value="1"/>
</dbReference>
<proteinExistence type="inferred from homology"/>
<name>DEF_NAUPA</name>
<feature type="chain" id="PRO_1000200742" description="Peptide deformylase">
    <location>
        <begin position="1"/>
        <end position="174"/>
    </location>
</feature>
<feature type="active site" evidence="1">
    <location>
        <position position="139"/>
    </location>
</feature>
<feature type="binding site" evidence="1">
    <location>
        <position position="96"/>
    </location>
    <ligand>
        <name>Fe cation</name>
        <dbReference type="ChEBI" id="CHEBI:24875"/>
    </ligand>
</feature>
<feature type="binding site" evidence="1">
    <location>
        <position position="138"/>
    </location>
    <ligand>
        <name>Fe cation</name>
        <dbReference type="ChEBI" id="CHEBI:24875"/>
    </ligand>
</feature>
<feature type="binding site" evidence="1">
    <location>
        <position position="142"/>
    </location>
    <ligand>
        <name>Fe cation</name>
        <dbReference type="ChEBI" id="CHEBI:24875"/>
    </ligand>
</feature>